<reference key="1">
    <citation type="journal article" date="2006" name="PLoS Genet.">
        <title>The complete genome sequence and comparative genome analysis of the high pathogenicity Yersinia enterocolitica strain 8081.</title>
        <authorList>
            <person name="Thomson N.R."/>
            <person name="Howard S."/>
            <person name="Wren B.W."/>
            <person name="Holden M.T.G."/>
            <person name="Crossman L."/>
            <person name="Challis G.L."/>
            <person name="Churcher C."/>
            <person name="Mungall K."/>
            <person name="Brooks K."/>
            <person name="Chillingworth T."/>
            <person name="Feltwell T."/>
            <person name="Abdellah Z."/>
            <person name="Hauser H."/>
            <person name="Jagels K."/>
            <person name="Maddison M."/>
            <person name="Moule S."/>
            <person name="Sanders M."/>
            <person name="Whitehead S."/>
            <person name="Quail M.A."/>
            <person name="Dougan G."/>
            <person name="Parkhill J."/>
            <person name="Prentice M.B."/>
        </authorList>
    </citation>
    <scope>NUCLEOTIDE SEQUENCE [LARGE SCALE GENOMIC DNA]</scope>
    <source>
        <strain>NCTC 13174 / 8081</strain>
    </source>
</reference>
<comment type="function">
    <text evidence="1">F(1)F(0) ATP synthase produces ATP from ADP in the presence of a proton or sodium gradient. F-type ATPases consist of two structural domains, F(1) containing the extramembraneous catalytic core and F(0) containing the membrane proton channel, linked together by a central stalk and a peripheral stalk. During catalysis, ATP synthesis in the catalytic domain of F(1) is coupled via a rotary mechanism of the central stalk subunits to proton translocation.</text>
</comment>
<comment type="function">
    <text evidence="1">Component of the F(0) channel, it forms part of the peripheral stalk, linking F(1) to F(0).</text>
</comment>
<comment type="subunit">
    <text evidence="1">F-type ATPases have 2 components, F(1) - the catalytic core - and F(0) - the membrane proton channel. F(1) has five subunits: alpha(3), beta(3), gamma(1), delta(1), epsilon(1). F(0) has three main subunits: a(1), b(2) and c(10-14). The alpha and beta chains form an alternating ring which encloses part of the gamma chain. F(1) is attached to F(0) by a central stalk formed by the gamma and epsilon chains, while a peripheral stalk is formed by the delta and b chains.</text>
</comment>
<comment type="subcellular location">
    <subcellularLocation>
        <location evidence="1">Cell inner membrane</location>
        <topology evidence="1">Single-pass membrane protein</topology>
    </subcellularLocation>
</comment>
<comment type="similarity">
    <text evidence="1">Belongs to the ATPase B chain family.</text>
</comment>
<proteinExistence type="inferred from homology"/>
<feature type="chain" id="PRO_5000201485" description="ATP synthase subunit b">
    <location>
        <begin position="1"/>
        <end position="156"/>
    </location>
</feature>
<feature type="transmembrane region" description="Helical" evidence="1">
    <location>
        <begin position="11"/>
        <end position="31"/>
    </location>
</feature>
<name>ATPF_YERE8</name>
<dbReference type="EMBL" id="AM286415">
    <property type="protein sequence ID" value="CAL14224.1"/>
    <property type="molecule type" value="Genomic_DNA"/>
</dbReference>
<dbReference type="RefSeq" id="WP_004393038.1">
    <property type="nucleotide sequence ID" value="NC_008800.1"/>
</dbReference>
<dbReference type="RefSeq" id="YP_001008342.1">
    <property type="nucleotide sequence ID" value="NC_008800.1"/>
</dbReference>
<dbReference type="SMR" id="A1JTD1"/>
<dbReference type="GeneID" id="93971154"/>
<dbReference type="KEGG" id="yen:YE4210"/>
<dbReference type="PATRIC" id="fig|393305.7.peg.4476"/>
<dbReference type="eggNOG" id="COG0711">
    <property type="taxonomic scope" value="Bacteria"/>
</dbReference>
<dbReference type="HOGENOM" id="CLU_079215_4_5_6"/>
<dbReference type="OrthoDB" id="9788020at2"/>
<dbReference type="Proteomes" id="UP000000642">
    <property type="component" value="Chromosome"/>
</dbReference>
<dbReference type="GO" id="GO:0005886">
    <property type="term" value="C:plasma membrane"/>
    <property type="evidence" value="ECO:0007669"/>
    <property type="project" value="UniProtKB-SubCell"/>
</dbReference>
<dbReference type="GO" id="GO:0045259">
    <property type="term" value="C:proton-transporting ATP synthase complex"/>
    <property type="evidence" value="ECO:0007669"/>
    <property type="project" value="UniProtKB-KW"/>
</dbReference>
<dbReference type="GO" id="GO:0046933">
    <property type="term" value="F:proton-transporting ATP synthase activity, rotational mechanism"/>
    <property type="evidence" value="ECO:0007669"/>
    <property type="project" value="UniProtKB-UniRule"/>
</dbReference>
<dbReference type="GO" id="GO:0046961">
    <property type="term" value="F:proton-transporting ATPase activity, rotational mechanism"/>
    <property type="evidence" value="ECO:0007669"/>
    <property type="project" value="TreeGrafter"/>
</dbReference>
<dbReference type="CDD" id="cd06503">
    <property type="entry name" value="ATP-synt_Fo_b"/>
    <property type="match status" value="1"/>
</dbReference>
<dbReference type="FunFam" id="1.20.5.620:FF:000001">
    <property type="entry name" value="ATP synthase subunit b"/>
    <property type="match status" value="1"/>
</dbReference>
<dbReference type="Gene3D" id="6.10.250.1580">
    <property type="match status" value="1"/>
</dbReference>
<dbReference type="HAMAP" id="MF_01398">
    <property type="entry name" value="ATP_synth_b_bprime"/>
    <property type="match status" value="1"/>
</dbReference>
<dbReference type="InterPro" id="IPR028987">
    <property type="entry name" value="ATP_synth_B-like_membr_sf"/>
</dbReference>
<dbReference type="InterPro" id="IPR002146">
    <property type="entry name" value="ATP_synth_b/b'su_bac/chlpt"/>
</dbReference>
<dbReference type="InterPro" id="IPR005864">
    <property type="entry name" value="ATP_synth_F0_bsu_bac"/>
</dbReference>
<dbReference type="InterPro" id="IPR050059">
    <property type="entry name" value="ATP_synthase_B_chain"/>
</dbReference>
<dbReference type="NCBIfam" id="TIGR01144">
    <property type="entry name" value="ATP_synt_b"/>
    <property type="match status" value="1"/>
</dbReference>
<dbReference type="NCBIfam" id="NF004411">
    <property type="entry name" value="PRK05759.1-2"/>
    <property type="match status" value="1"/>
</dbReference>
<dbReference type="NCBIfam" id="NF004413">
    <property type="entry name" value="PRK05759.1-4"/>
    <property type="match status" value="1"/>
</dbReference>
<dbReference type="PANTHER" id="PTHR33445:SF1">
    <property type="entry name" value="ATP SYNTHASE SUBUNIT B"/>
    <property type="match status" value="1"/>
</dbReference>
<dbReference type="PANTHER" id="PTHR33445">
    <property type="entry name" value="ATP SYNTHASE SUBUNIT B', CHLOROPLASTIC"/>
    <property type="match status" value="1"/>
</dbReference>
<dbReference type="Pfam" id="PF00430">
    <property type="entry name" value="ATP-synt_B"/>
    <property type="match status" value="1"/>
</dbReference>
<dbReference type="SUPFAM" id="SSF81573">
    <property type="entry name" value="F1F0 ATP synthase subunit B, membrane domain"/>
    <property type="match status" value="1"/>
</dbReference>
<organism>
    <name type="scientific">Yersinia enterocolitica serotype O:8 / biotype 1B (strain NCTC 13174 / 8081)</name>
    <dbReference type="NCBI Taxonomy" id="393305"/>
    <lineage>
        <taxon>Bacteria</taxon>
        <taxon>Pseudomonadati</taxon>
        <taxon>Pseudomonadota</taxon>
        <taxon>Gammaproteobacteria</taxon>
        <taxon>Enterobacterales</taxon>
        <taxon>Yersiniaceae</taxon>
        <taxon>Yersinia</taxon>
    </lineage>
</organism>
<accession>A1JTD1</accession>
<gene>
    <name evidence="1" type="primary">atpF</name>
    <name type="ordered locus">YE4210</name>
</gene>
<evidence type="ECO:0000255" key="1">
    <source>
        <dbReference type="HAMAP-Rule" id="MF_01398"/>
    </source>
</evidence>
<sequence length="156" mass="17272">MNLNATILGQAIAFVLFVLFCMKYIWPPIMAAIEKRQKEIADGLSSAERAKKDLDLAQANATDQLKKAKAEAQVIIEQASKRKAQILDEAKAEAEQERNKIVAQAQAEIDAERKRAREELRKQVAMLAIAGAEKIIERSVDEAANSDIVDKLVAEL</sequence>
<protein>
    <recommendedName>
        <fullName evidence="1">ATP synthase subunit b</fullName>
    </recommendedName>
    <alternativeName>
        <fullName evidence="1">ATP synthase F(0) sector subunit b</fullName>
    </alternativeName>
    <alternativeName>
        <fullName evidence="1">ATPase subunit I</fullName>
    </alternativeName>
    <alternativeName>
        <fullName evidence="1">F-type ATPase subunit b</fullName>
        <shortName evidence="1">F-ATPase subunit b</shortName>
    </alternativeName>
</protein>
<keyword id="KW-0066">ATP synthesis</keyword>
<keyword id="KW-0997">Cell inner membrane</keyword>
<keyword id="KW-1003">Cell membrane</keyword>
<keyword id="KW-0138">CF(0)</keyword>
<keyword id="KW-0375">Hydrogen ion transport</keyword>
<keyword id="KW-0406">Ion transport</keyword>
<keyword id="KW-0472">Membrane</keyword>
<keyword id="KW-0812">Transmembrane</keyword>
<keyword id="KW-1133">Transmembrane helix</keyword>
<keyword id="KW-0813">Transport</keyword>